<sequence length="836" mass="95202">MERGTVLIQPGLWTRDTSWTLLYFLCYILPQTSPQVLRIGGIFETVENEPVNVEELAFKFAVTSINRNRTLMPNTTLTYDIQRINLFDSFEASRRACDQLALGVAALFGPSHSSSVSAVQSICNALEVPHIQTRWKHPSVDNRDLFYINLYPDYAAISRAVLDLVLYYNWKTVTVVYEDSTGLIRLQELIKAPSRYNIKIKIRQLPSGNKDAKPLLKEMKKGKEFYVIFDCSHETAAEILKQILFMGMMTEYYHYFFTTLDLFALDLELYRYSGVNMTGFRLLNIDNPHVSSIIEKWSMERLQAPPRPETGLLDGVMTTEAALMYDAVYMVAIASHRASQLTVSSLQCHRHKPWRLGPRFMNLIKEARWDGLTGRITFNKTDGLRKDFDLDIISLKEEGTEKIGIWNSNSGLNMTDGNRDRSNNITDSLANRTLIVTTILEEPYVMYRKSDKPLYGNDRFEGYCLDLLKELSNILGFLYDVKLVPDGKYGAQNDKGEWNGMVKELIDHRADLAVAPLTITYVREKVIDFSKPFMTLGISILYRKPNGTNPGVFSFLNPLSPDIWMYVLLACLGVSCVLFVIARFTPYEWYNPHPCNPDSDVVENNFTLLNSFWFGVGALMQQGSELMPKALSTRIVGGIWWFFTLIIISSYTANLAAFLTVERMESPIDSADDLAKQTKIEYGAVRDGSTMTFFKKSKISTYEKMWAFMSSRQPSALGVENIGGIFIVLAAGLVLSVFVAIGEFIYKSRKNNDIEQKGKSSRLRFYFRNKVRFHGSKTESLGVEKCLSFNAIMEELGISLKNQKKIKKKSRTKGKSSFTSILTCHQRRTQRKETVA</sequence>
<dbReference type="EMBL" id="X66118">
    <property type="status" value="NOT_ANNOTATED_CDS"/>
    <property type="molecule type" value="mRNA"/>
</dbReference>
<dbReference type="EMBL" id="U31444">
    <property type="protein sequence ID" value="AAA85222.1"/>
    <property type="molecule type" value="Genomic_DNA"/>
</dbReference>
<dbReference type="PIR" id="A41053">
    <property type="entry name" value="A41053"/>
</dbReference>
<dbReference type="SMR" id="Q60934"/>
<dbReference type="FunCoup" id="Q60934">
    <property type="interactions" value="93"/>
</dbReference>
<dbReference type="IntAct" id="Q60934">
    <property type="interactions" value="5"/>
</dbReference>
<dbReference type="STRING" id="10090.ENSMUSP00000072107"/>
<dbReference type="GlyCosmos" id="Q60934">
    <property type="glycosylation" value="8 sites, No reported glycans"/>
</dbReference>
<dbReference type="GlyGen" id="Q60934">
    <property type="glycosylation" value="9 sites, 9 N-linked glycans (6 sites)"/>
</dbReference>
<dbReference type="iPTMnet" id="Q60934"/>
<dbReference type="PhosphoSitePlus" id="Q60934"/>
<dbReference type="ProteomicsDB" id="269831">
    <molecule id="Q60934-1"/>
</dbReference>
<dbReference type="UCSC" id="uc007zuw.2">
    <molecule id="Q60934-1"/>
    <property type="organism name" value="mouse"/>
</dbReference>
<dbReference type="AGR" id="MGI:95814"/>
<dbReference type="MGI" id="MGI:95814">
    <property type="gene designation" value="Grik1"/>
</dbReference>
<dbReference type="eggNOG" id="KOG1052">
    <property type="taxonomic scope" value="Eukaryota"/>
</dbReference>
<dbReference type="InParanoid" id="Q60934"/>
<dbReference type="OrthoDB" id="5984008at2759"/>
<dbReference type="Reactome" id="R-MMU-451307">
    <property type="pathway name" value="Activation of Na-permeable kainate receptors"/>
</dbReference>
<dbReference type="Reactome" id="R-MMU-451308">
    <property type="pathway name" value="Activation of Ca-permeable Kainate Receptor"/>
</dbReference>
<dbReference type="ChiTaRS" id="Grik1">
    <property type="organism name" value="mouse"/>
</dbReference>
<dbReference type="PRO" id="PR:Q60934"/>
<dbReference type="Proteomes" id="UP000000589">
    <property type="component" value="Unplaced"/>
</dbReference>
<dbReference type="RNAct" id="Q60934">
    <property type="molecule type" value="protein"/>
</dbReference>
<dbReference type="GO" id="GO:0030425">
    <property type="term" value="C:dendrite"/>
    <property type="evidence" value="ECO:0000314"/>
    <property type="project" value="MGI"/>
</dbReference>
<dbReference type="GO" id="GO:0008328">
    <property type="term" value="C:ionotropic glutamate receptor complex"/>
    <property type="evidence" value="ECO:0000305"/>
    <property type="project" value="MGI"/>
</dbReference>
<dbReference type="GO" id="GO:0032983">
    <property type="term" value="C:kainate selective glutamate receptor complex"/>
    <property type="evidence" value="ECO:0000353"/>
    <property type="project" value="MGI"/>
</dbReference>
<dbReference type="GO" id="GO:0016020">
    <property type="term" value="C:membrane"/>
    <property type="evidence" value="ECO:0000314"/>
    <property type="project" value="MGI"/>
</dbReference>
<dbReference type="GO" id="GO:0014069">
    <property type="term" value="C:postsynaptic density"/>
    <property type="evidence" value="ECO:0000314"/>
    <property type="project" value="MGI"/>
</dbReference>
<dbReference type="GO" id="GO:0045211">
    <property type="term" value="C:postsynaptic membrane"/>
    <property type="evidence" value="ECO:0007669"/>
    <property type="project" value="UniProtKB-SubCell"/>
</dbReference>
<dbReference type="GO" id="GO:0042734">
    <property type="term" value="C:presynaptic membrane"/>
    <property type="evidence" value="ECO:0000314"/>
    <property type="project" value="MGI"/>
</dbReference>
<dbReference type="GO" id="GO:0045202">
    <property type="term" value="C:synapse"/>
    <property type="evidence" value="ECO:0000314"/>
    <property type="project" value="MGI"/>
</dbReference>
<dbReference type="GO" id="GO:0022849">
    <property type="term" value="F:glutamate-gated calcium ion channel activity"/>
    <property type="evidence" value="ECO:0000250"/>
    <property type="project" value="UniProtKB"/>
</dbReference>
<dbReference type="GO" id="GO:0015277">
    <property type="term" value="F:kainate selective glutamate receptor activity"/>
    <property type="evidence" value="ECO:0000314"/>
    <property type="project" value="MGI"/>
</dbReference>
<dbReference type="GO" id="GO:0005313">
    <property type="term" value="F:L-glutamate transmembrane transporter activity"/>
    <property type="evidence" value="ECO:0000315"/>
    <property type="project" value="MGI"/>
</dbReference>
<dbReference type="GO" id="GO:0030534">
    <property type="term" value="P:adult behavior"/>
    <property type="evidence" value="ECO:0000315"/>
    <property type="project" value="MGI"/>
</dbReference>
<dbReference type="GO" id="GO:0048266">
    <property type="term" value="P:behavioral response to pain"/>
    <property type="evidence" value="ECO:0000315"/>
    <property type="project" value="MGI"/>
</dbReference>
<dbReference type="GO" id="GO:0051649">
    <property type="term" value="P:establishment of localization in cell"/>
    <property type="evidence" value="ECO:0000315"/>
    <property type="project" value="MGI"/>
</dbReference>
<dbReference type="GO" id="GO:0060079">
    <property type="term" value="P:excitatory postsynaptic potential"/>
    <property type="evidence" value="ECO:0000315"/>
    <property type="project" value="MGI"/>
</dbReference>
<dbReference type="GO" id="GO:0014051">
    <property type="term" value="P:gamma-aminobutyric acid secretion"/>
    <property type="evidence" value="ECO:0000315"/>
    <property type="project" value="MGI"/>
</dbReference>
<dbReference type="GO" id="GO:0060080">
    <property type="term" value="P:inhibitory postsynaptic potential"/>
    <property type="evidence" value="ECO:0000315"/>
    <property type="project" value="MGI"/>
</dbReference>
<dbReference type="GO" id="GO:0051899">
    <property type="term" value="P:membrane depolarization"/>
    <property type="evidence" value="ECO:0000315"/>
    <property type="project" value="MGI"/>
</dbReference>
<dbReference type="GO" id="GO:0051967">
    <property type="term" value="P:negative regulation of synaptic transmission, glutamatergic"/>
    <property type="evidence" value="ECO:0000316"/>
    <property type="project" value="MGI"/>
</dbReference>
<dbReference type="GO" id="GO:0014054">
    <property type="term" value="P:positive regulation of gamma-aminobutyric acid secretion"/>
    <property type="evidence" value="ECO:0000315"/>
    <property type="project" value="MGI"/>
</dbReference>
<dbReference type="GO" id="GO:0032230">
    <property type="term" value="P:positive regulation of synaptic transmission, GABAergic"/>
    <property type="evidence" value="ECO:0000315"/>
    <property type="project" value="MGI"/>
</dbReference>
<dbReference type="GO" id="GO:0099171">
    <property type="term" value="P:presynaptic modulation of chemical synaptic transmission"/>
    <property type="evidence" value="ECO:0000316"/>
    <property type="project" value="MGI"/>
</dbReference>
<dbReference type="GO" id="GO:0048169">
    <property type="term" value="P:regulation of long-term neuronal synaptic plasticity"/>
    <property type="evidence" value="ECO:0000304"/>
    <property type="project" value="UniProtKB"/>
</dbReference>
<dbReference type="GO" id="GO:0042391">
    <property type="term" value="P:regulation of membrane potential"/>
    <property type="evidence" value="ECO:0000314"/>
    <property type="project" value="MGI"/>
</dbReference>
<dbReference type="GO" id="GO:0048172">
    <property type="term" value="P:regulation of short-term neuronal synaptic plasticity"/>
    <property type="evidence" value="ECO:0000304"/>
    <property type="project" value="UniProtKB"/>
</dbReference>
<dbReference type="GO" id="GO:0051932">
    <property type="term" value="P:synaptic transmission, GABAergic"/>
    <property type="evidence" value="ECO:0000315"/>
    <property type="project" value="MGI"/>
</dbReference>
<dbReference type="GO" id="GO:0035249">
    <property type="term" value="P:synaptic transmission, glutamatergic"/>
    <property type="evidence" value="ECO:0000315"/>
    <property type="project" value="MGI"/>
</dbReference>
<dbReference type="CDD" id="cd06382">
    <property type="entry name" value="PBP1_iGluR_Kainate"/>
    <property type="match status" value="1"/>
</dbReference>
<dbReference type="FunFam" id="3.40.50.2300:FF:000010">
    <property type="entry name" value="Glutamate ionotropic receptor kainate type subunit 1"/>
    <property type="match status" value="1"/>
</dbReference>
<dbReference type="FunFam" id="3.40.190.10:FF:000060">
    <property type="entry name" value="Glutamate receptor ionotropic, kainate 1"/>
    <property type="match status" value="1"/>
</dbReference>
<dbReference type="FunFam" id="3.40.190.10:FF:000210">
    <property type="entry name" value="Glutamate receptor ionotropic, kainate 1"/>
    <property type="match status" value="1"/>
</dbReference>
<dbReference type="FunFam" id="1.10.287.70:FF:000010">
    <property type="entry name" value="Putative glutamate receptor ionotropic kainate 1"/>
    <property type="match status" value="1"/>
</dbReference>
<dbReference type="Gene3D" id="1.10.287.70">
    <property type="match status" value="1"/>
</dbReference>
<dbReference type="Gene3D" id="3.40.50.2300">
    <property type="match status" value="2"/>
</dbReference>
<dbReference type="Gene3D" id="3.40.190.10">
    <property type="entry name" value="Periplasmic binding protein-like II"/>
    <property type="match status" value="1"/>
</dbReference>
<dbReference type="InterPro" id="IPR001828">
    <property type="entry name" value="ANF_lig-bd_rcpt"/>
</dbReference>
<dbReference type="InterPro" id="IPR019594">
    <property type="entry name" value="Glu/Gly-bd"/>
</dbReference>
<dbReference type="InterPro" id="IPR001508">
    <property type="entry name" value="Iono_Glu_rcpt_met"/>
</dbReference>
<dbReference type="InterPro" id="IPR015683">
    <property type="entry name" value="Ionotropic_Glu_rcpt"/>
</dbReference>
<dbReference type="InterPro" id="IPR001320">
    <property type="entry name" value="Iontro_rcpt_C"/>
</dbReference>
<dbReference type="InterPro" id="IPR028082">
    <property type="entry name" value="Peripla_BP_I"/>
</dbReference>
<dbReference type="PANTHER" id="PTHR18966">
    <property type="entry name" value="IONOTROPIC GLUTAMATE RECEPTOR"/>
    <property type="match status" value="1"/>
</dbReference>
<dbReference type="Pfam" id="PF01094">
    <property type="entry name" value="ANF_receptor"/>
    <property type="match status" value="1"/>
</dbReference>
<dbReference type="Pfam" id="PF00060">
    <property type="entry name" value="Lig_chan"/>
    <property type="match status" value="1"/>
</dbReference>
<dbReference type="Pfam" id="PF10613">
    <property type="entry name" value="Lig_chan-Glu_bd"/>
    <property type="match status" value="1"/>
</dbReference>
<dbReference type="PRINTS" id="PR00177">
    <property type="entry name" value="NMDARECEPTOR"/>
</dbReference>
<dbReference type="SMART" id="SM00918">
    <property type="entry name" value="Lig_chan-Glu_bd"/>
    <property type="match status" value="1"/>
</dbReference>
<dbReference type="SMART" id="SM00079">
    <property type="entry name" value="PBPe"/>
    <property type="match status" value="1"/>
</dbReference>
<dbReference type="SUPFAM" id="SSF53822">
    <property type="entry name" value="Periplasmic binding protein-like I"/>
    <property type="match status" value="1"/>
</dbReference>
<dbReference type="SUPFAM" id="SSF53850">
    <property type="entry name" value="Periplasmic binding protein-like II"/>
    <property type="match status" value="1"/>
</dbReference>
<protein>
    <recommendedName>
        <fullName>Glutamate receptor ionotropic, kainate 1</fullName>
        <shortName>GluK1</shortName>
    </recommendedName>
    <alternativeName>
        <fullName>Glutamate receptor 5</fullName>
        <shortName>GluR-5</shortName>
        <shortName>GluR5</shortName>
    </alternativeName>
</protein>
<reference key="1">
    <citation type="journal article" date="1993" name="NeuroReport">
        <title>Expression and novel subunit isoforms of glutamate receptor genes GluR5 and GluR6.</title>
        <authorList>
            <person name="Gregor P."/>
            <person name="O'Hara B.F."/>
            <person name="Yang X."/>
            <person name="Uhl G.R."/>
        </authorList>
    </citation>
    <scope>NUCLEOTIDE SEQUENCE [MRNA]</scope>
    <scope>TISSUE SPECIFICITY</scope>
    <source>
        <strain>BALB/cJ</strain>
        <tissue>Brain</tissue>
    </source>
</reference>
<reference key="2">
    <citation type="journal article" date="1996" name="Proc. Natl. Acad. Sci. U.S.A.">
        <title>Q/R site editing in kainate receptor GluR5 and GluR6 pre-mRNAs requires distant intronic sequences.</title>
        <authorList>
            <person name="Herb A."/>
            <person name="Higuchi M."/>
            <person name="Sprengel R."/>
            <person name="Seeburg P.H."/>
        </authorList>
    </citation>
    <scope>NUCLEOTIDE SEQUENCE [GENOMIC DNA] OF 584-695</scope>
    <scope>RNA EDITING OF POSITION 621</scope>
    <source>
        <strain>BALB/cJ</strain>
    </source>
</reference>
<reference key="3">
    <citation type="journal article" date="1991" name="Cell">
        <title>RNA editing in brain controls a determinant of ion flow in glutamate-gated channels.</title>
        <authorList>
            <person name="Sommer B."/>
            <person name="Koehler M."/>
            <person name="Sprengel R."/>
            <person name="Seeburg P.H."/>
        </authorList>
    </citation>
    <scope>NUCLEOTIDE SEQUENCE OF 606-622</scope>
    <scope>RNA EDITING OF POSITION 621</scope>
</reference>
<keyword id="KW-0025">Alternative splicing</keyword>
<keyword id="KW-1003">Cell membrane</keyword>
<keyword id="KW-0325">Glycoprotein</keyword>
<keyword id="KW-0407">Ion channel</keyword>
<keyword id="KW-0406">Ion transport</keyword>
<keyword id="KW-1071">Ligand-gated ion channel</keyword>
<keyword id="KW-0472">Membrane</keyword>
<keyword id="KW-0628">Postsynaptic cell membrane</keyword>
<keyword id="KW-0675">Receptor</keyword>
<keyword id="KW-1185">Reference proteome</keyword>
<keyword id="KW-0691">RNA editing</keyword>
<keyword id="KW-0732">Signal</keyword>
<keyword id="KW-0770">Synapse</keyword>
<keyword id="KW-0812">Transmembrane</keyword>
<keyword id="KW-1133">Transmembrane helix</keyword>
<keyword id="KW-0813">Transport</keyword>
<comment type="function">
    <text evidence="1">Ionotropic glutamate receptor that functions as a cation-permeable ligand-gated ion channel, gated by L-glutamate and the glutamatergic agonist kainic acid. L-glutamate acts as an excitatory neurotransmitter at many synapses in the central nervous system. Binding of the excitatory neurotransmitter L-glutamate induces a conformation change, leading to the opening of the cation channel, and thereby converts the chemical signal to an electrical impulse. The receptor then desensitizes rapidly and enters a transient inactive state, characterized by the presence of bound agonist.</text>
</comment>
<comment type="catalytic activity">
    <reaction evidence="1">
        <text>Ca(2+)(in) = Ca(2+)(out)</text>
        <dbReference type="Rhea" id="RHEA:29671"/>
        <dbReference type="ChEBI" id="CHEBI:29108"/>
    </reaction>
</comment>
<comment type="subunit">
    <text evidence="1">Homotetramer or heterotetramer of pore-forming glutamate receptor subunits. Tetramers may be formed by the dimerization of dimers. Can form functional heteromeric receptors with GRIK4 and GRIK5. Interacts with KLHL17.</text>
</comment>
<comment type="subcellular location">
    <subcellularLocation>
        <location evidence="1">Cell membrane</location>
        <topology evidence="3">Multi-pass membrane protein</topology>
    </subcellularLocation>
    <subcellularLocation>
        <location evidence="1">Postsynaptic cell membrane</location>
        <topology evidence="3">Multi-pass membrane protein</topology>
    </subcellularLocation>
</comment>
<comment type="alternative products">
    <event type="alternative splicing"/>
    <isoform>
        <id>Q60934-1</id>
        <name>1</name>
        <sequence type="displayed"/>
    </isoform>
    <text>At least 2 isoforms are produced.</text>
</comment>
<comment type="tissue specificity">
    <text evidence="5">Most abundant in the cerebellum. Also present in the suprachiasmatic nuclei of the hypothalamus.</text>
</comment>
<comment type="RNA editing">
    <location>
        <position position="621" evidence="4 6"/>
    </location>
    <text>Partially edited.</text>
</comment>
<comment type="miscellaneous">
    <text evidence="2">The postsynaptic actions of Glu are mediated by a variety of receptors that are named according to their selective agonists. This receptor binds domoate &gt; kainate &gt; L-glutamate = quisqualate &gt; CNQX = DNQX &gt; AMPA &gt; dihydrokainate &gt; NMDA (By similarity).</text>
</comment>
<comment type="similarity">
    <text evidence="7">Belongs to the glutamate-gated ion channel (TC 1.A.10.1) family. GRIK1 subfamily.</text>
</comment>
<accession>Q60934</accession>
<organism>
    <name type="scientific">Mus musculus</name>
    <name type="common">Mouse</name>
    <dbReference type="NCBI Taxonomy" id="10090"/>
    <lineage>
        <taxon>Eukaryota</taxon>
        <taxon>Metazoa</taxon>
        <taxon>Chordata</taxon>
        <taxon>Craniata</taxon>
        <taxon>Vertebrata</taxon>
        <taxon>Euteleostomi</taxon>
        <taxon>Mammalia</taxon>
        <taxon>Eutheria</taxon>
        <taxon>Euarchontoglires</taxon>
        <taxon>Glires</taxon>
        <taxon>Rodentia</taxon>
        <taxon>Myomorpha</taxon>
        <taxon>Muroidea</taxon>
        <taxon>Muridae</taxon>
        <taxon>Murinae</taxon>
        <taxon>Mus</taxon>
        <taxon>Mus</taxon>
    </lineage>
</organism>
<gene>
    <name type="primary">Grik1</name>
    <name type="synonym">Glur5</name>
</gene>
<feature type="signal peptide" evidence="3">
    <location>
        <begin position="1"/>
        <end position="30"/>
    </location>
</feature>
<feature type="chain" id="PRO_0000011542" description="Glutamate receptor ionotropic, kainate 1">
    <location>
        <begin position="31"/>
        <end position="836"/>
    </location>
</feature>
<feature type="topological domain" description="Extracellular" evidence="3">
    <location>
        <begin position="31"/>
        <end position="561"/>
    </location>
</feature>
<feature type="transmembrane region" description="Helical" evidence="3">
    <location>
        <begin position="562"/>
        <end position="582"/>
    </location>
</feature>
<feature type="topological domain" description="Cytoplasmic" evidence="3">
    <location>
        <begin position="583"/>
        <end position="638"/>
    </location>
</feature>
<feature type="transmembrane region" description="Helical" evidence="3">
    <location>
        <begin position="639"/>
        <end position="659"/>
    </location>
</feature>
<feature type="topological domain" description="Extracellular" evidence="3">
    <location>
        <begin position="660"/>
        <end position="721"/>
    </location>
</feature>
<feature type="transmembrane region" description="Helical" evidence="3">
    <location>
        <begin position="722"/>
        <end position="742"/>
    </location>
</feature>
<feature type="topological domain" description="Cytoplasmic" evidence="3">
    <location>
        <begin position="743"/>
        <end position="836"/>
    </location>
</feature>
<feature type="binding site" evidence="1">
    <location>
        <position position="516"/>
    </location>
    <ligand>
        <name>L-glutamate</name>
        <dbReference type="ChEBI" id="CHEBI:29985"/>
    </ligand>
</feature>
<feature type="binding site" evidence="1">
    <location>
        <position position="518"/>
    </location>
    <ligand>
        <name>L-glutamate</name>
        <dbReference type="ChEBI" id="CHEBI:29985"/>
    </ligand>
</feature>
<feature type="binding site" evidence="1">
    <location>
        <position position="523"/>
    </location>
    <ligand>
        <name>L-glutamate</name>
        <dbReference type="ChEBI" id="CHEBI:29985"/>
    </ligand>
</feature>
<feature type="binding site" evidence="1">
    <location>
        <position position="689"/>
    </location>
    <ligand>
        <name>L-glutamate</name>
        <dbReference type="ChEBI" id="CHEBI:29985"/>
    </ligand>
</feature>
<feature type="binding site" evidence="1">
    <location>
        <position position="690"/>
    </location>
    <ligand>
        <name>L-glutamate</name>
        <dbReference type="ChEBI" id="CHEBI:29985"/>
    </ligand>
</feature>
<feature type="glycosylation site" description="N-linked (GlcNAc...) asparagine" evidence="3">
    <location>
        <position position="68"/>
    </location>
</feature>
<feature type="glycosylation site" description="N-linked (GlcNAc...) asparagine" evidence="3">
    <location>
        <position position="74"/>
    </location>
</feature>
<feature type="glycosylation site" description="N-linked (GlcNAc...) asparagine" evidence="3">
    <location>
        <position position="276"/>
    </location>
</feature>
<feature type="glycosylation site" description="N-linked (GlcNAc...) asparagine" evidence="3">
    <location>
        <position position="379"/>
    </location>
</feature>
<feature type="glycosylation site" description="N-linked (GlcNAc...) asparagine" evidence="3">
    <location>
        <position position="413"/>
    </location>
</feature>
<feature type="glycosylation site" description="N-linked (GlcNAc...) asparagine" evidence="3">
    <location>
        <position position="424"/>
    </location>
</feature>
<feature type="glycosylation site" description="N-linked (GlcNAc...) asparagine" evidence="3">
    <location>
        <position position="431"/>
    </location>
</feature>
<feature type="glycosylation site" description="N-linked (GlcNAc...) asparagine" evidence="3">
    <location>
        <position position="546"/>
    </location>
</feature>
<feature type="sequence variant" description="In RNA edited version.">
    <original>Q</original>
    <variation>R</variation>
    <location>
        <position position="621"/>
    </location>
</feature>
<proteinExistence type="evidence at transcript level"/>
<evidence type="ECO:0000250" key="1">
    <source>
        <dbReference type="UniProtKB" id="P22756"/>
    </source>
</evidence>
<evidence type="ECO:0000250" key="2">
    <source>
        <dbReference type="UniProtKB" id="P39086"/>
    </source>
</evidence>
<evidence type="ECO:0000255" key="3"/>
<evidence type="ECO:0000269" key="4">
    <source>
    </source>
</evidence>
<evidence type="ECO:0000269" key="5">
    <source>
    </source>
</evidence>
<evidence type="ECO:0000269" key="6">
    <source>
    </source>
</evidence>
<evidence type="ECO:0000305" key="7"/>
<name>GRIK1_MOUSE</name>